<dbReference type="EC" id="2.7.7.6"/>
<dbReference type="EMBL" id="X75815">
    <property type="protein sequence ID" value="CAA53451.1"/>
    <property type="molecule type" value="Genomic_DNA"/>
</dbReference>
<dbReference type="PIR" id="S41916">
    <property type="entry name" value="S41916"/>
</dbReference>
<dbReference type="SMR" id="P36441"/>
<dbReference type="GO" id="GO:0009507">
    <property type="term" value="C:chloroplast"/>
    <property type="evidence" value="ECO:0007669"/>
    <property type="project" value="UniProtKB-SubCell"/>
</dbReference>
<dbReference type="GO" id="GO:0000428">
    <property type="term" value="C:DNA-directed RNA polymerase complex"/>
    <property type="evidence" value="ECO:0007669"/>
    <property type="project" value="UniProtKB-KW"/>
</dbReference>
<dbReference type="GO" id="GO:0005739">
    <property type="term" value="C:mitochondrion"/>
    <property type="evidence" value="ECO:0007669"/>
    <property type="project" value="GOC"/>
</dbReference>
<dbReference type="GO" id="GO:0003899">
    <property type="term" value="F:DNA-directed RNA polymerase activity"/>
    <property type="evidence" value="ECO:0007669"/>
    <property type="project" value="UniProtKB-EC"/>
</dbReference>
<gene>
    <name type="primary">rpoC1</name>
</gene>
<keyword id="KW-0150">Chloroplast</keyword>
<keyword id="KW-0240">DNA-directed RNA polymerase</keyword>
<keyword id="KW-0548">Nucleotidyltransferase</keyword>
<keyword id="KW-0934">Plastid</keyword>
<keyword id="KW-0804">Transcription</keyword>
<keyword id="KW-0808">Transferase</keyword>
<name>RPOC1_HETAK</name>
<comment type="function">
    <text evidence="1">DNA-dependent RNA polymerase catalyzes the transcription of DNA into RNA using the four ribonucleoside triphosphates as substrates.</text>
</comment>
<comment type="catalytic activity">
    <reaction>
        <text>RNA(n) + a ribonucleoside 5'-triphosphate = RNA(n+1) + diphosphate</text>
        <dbReference type="Rhea" id="RHEA:21248"/>
        <dbReference type="Rhea" id="RHEA-COMP:14527"/>
        <dbReference type="Rhea" id="RHEA-COMP:17342"/>
        <dbReference type="ChEBI" id="CHEBI:33019"/>
        <dbReference type="ChEBI" id="CHEBI:61557"/>
        <dbReference type="ChEBI" id="CHEBI:140395"/>
        <dbReference type="EC" id="2.7.7.6"/>
    </reaction>
</comment>
<comment type="subunit">
    <text evidence="1">In plastids the minimal PEP RNA polymerase catalytic core is composed of four subunits: alpha, beta, beta', and beta''. When a (nuclear-encoded) sigma factor is associated with the core the holoenzyme is formed, which can initiate transcription (By similarity).</text>
</comment>
<comment type="subcellular location">
    <subcellularLocation>
        <location>Plastid</location>
        <location>Chloroplast</location>
    </subcellularLocation>
</comment>
<comment type="similarity">
    <text evidence="2">Belongs to the RNA polymerase beta' chain family. RpoC1 subfamily.</text>
</comment>
<evidence type="ECO:0000250" key="1"/>
<evidence type="ECO:0000305" key="2"/>
<organism>
    <name type="scientific">Heterosigma akashiwo</name>
    <name type="common">Chromophytic alga</name>
    <name type="synonym">Heterosigma carterae</name>
    <dbReference type="NCBI Taxonomy" id="2829"/>
    <lineage>
        <taxon>Eukaryota</taxon>
        <taxon>Sar</taxon>
        <taxon>Stramenopiles</taxon>
        <taxon>Ochrophyta</taxon>
        <taxon>Raphidophyceae</taxon>
        <taxon>Chattonellales</taxon>
        <taxon>Chattonellaceae</taxon>
        <taxon>Heterosigma</taxon>
    </lineage>
</organism>
<geneLocation type="chloroplast"/>
<proteinExistence type="inferred from homology"/>
<feature type="chain" id="PRO_0000067875" description="DNA-directed RNA polymerase subunit beta'">
    <location>
        <begin position="1"/>
        <end position="33" status="greater than"/>
    </location>
</feature>
<feature type="non-terminal residue">
    <location>
        <position position="33"/>
    </location>
</feature>
<protein>
    <recommendedName>
        <fullName>DNA-directed RNA polymerase subunit beta'</fullName>
        <ecNumber>2.7.7.6</ecNumber>
    </recommendedName>
    <alternativeName>
        <fullName>PEP</fullName>
    </alternativeName>
    <alternativeName>
        <fullName>Plastid-encoded RNA polymerase subunit beta'</fullName>
        <shortName>RNA polymerase subunit beta'</shortName>
    </alternativeName>
</protein>
<sequence>MAKRLLPVGLVVGEITKTDTINYRTFKPETGGL</sequence>
<reference key="1">
    <citation type="submission" date="1993-11" db="EMBL/GenBank/DDBJ databases">
        <authorList>
            <person name="Mangahas J.L."/>
            <person name="Cattolico R.A."/>
            <person name="Reynolds A.E."/>
        </authorList>
    </citation>
    <scope>NUCLEOTIDE SEQUENCE [GENOMIC DNA]</scope>
</reference>
<accession>P36441</accession>